<comment type="function">
    <text evidence="1">Catalyzes the reversible oxidation of malate to oxaloacetate.</text>
</comment>
<comment type="catalytic activity">
    <reaction evidence="1">
        <text>(S)-malate + NAD(+) = oxaloacetate + NADH + H(+)</text>
        <dbReference type="Rhea" id="RHEA:21432"/>
        <dbReference type="ChEBI" id="CHEBI:15378"/>
        <dbReference type="ChEBI" id="CHEBI:15589"/>
        <dbReference type="ChEBI" id="CHEBI:16452"/>
        <dbReference type="ChEBI" id="CHEBI:57540"/>
        <dbReference type="ChEBI" id="CHEBI:57945"/>
        <dbReference type="EC" id="1.1.1.37"/>
    </reaction>
</comment>
<comment type="subunit">
    <text>Homotetramer; arranged as a dimer of dimers.</text>
</comment>
<comment type="similarity">
    <text evidence="1">Belongs to the LDH/MDH superfamily. MDH type 3 family.</text>
</comment>
<dbReference type="EC" id="1.1.1.37" evidence="1"/>
<dbReference type="EMBL" id="CP001099">
    <property type="protein sequence ID" value="ACF11992.1"/>
    <property type="molecule type" value="Genomic_DNA"/>
</dbReference>
<dbReference type="RefSeq" id="WP_012502825.1">
    <property type="nucleotide sequence ID" value="NC_011027.1"/>
</dbReference>
<dbReference type="SMR" id="B3QPY9"/>
<dbReference type="STRING" id="517417.Cpar_1594"/>
<dbReference type="KEGG" id="cpc:Cpar_1594"/>
<dbReference type="eggNOG" id="COG0039">
    <property type="taxonomic scope" value="Bacteria"/>
</dbReference>
<dbReference type="HOGENOM" id="CLU_045401_2_1_10"/>
<dbReference type="OrthoDB" id="9802969at2"/>
<dbReference type="Proteomes" id="UP000008811">
    <property type="component" value="Chromosome"/>
</dbReference>
<dbReference type="GO" id="GO:0004459">
    <property type="term" value="F:L-lactate dehydrogenase activity"/>
    <property type="evidence" value="ECO:0007669"/>
    <property type="project" value="TreeGrafter"/>
</dbReference>
<dbReference type="GO" id="GO:0030060">
    <property type="term" value="F:L-malate dehydrogenase (NAD+) activity"/>
    <property type="evidence" value="ECO:0007669"/>
    <property type="project" value="UniProtKB-UniRule"/>
</dbReference>
<dbReference type="GO" id="GO:0006089">
    <property type="term" value="P:lactate metabolic process"/>
    <property type="evidence" value="ECO:0007669"/>
    <property type="project" value="TreeGrafter"/>
</dbReference>
<dbReference type="GO" id="GO:0006099">
    <property type="term" value="P:tricarboxylic acid cycle"/>
    <property type="evidence" value="ECO:0007669"/>
    <property type="project" value="UniProtKB-UniRule"/>
</dbReference>
<dbReference type="CDD" id="cd01339">
    <property type="entry name" value="LDH-like_MDH"/>
    <property type="match status" value="1"/>
</dbReference>
<dbReference type="FunFam" id="3.40.50.720:FF:000018">
    <property type="entry name" value="Malate dehydrogenase"/>
    <property type="match status" value="1"/>
</dbReference>
<dbReference type="FunFam" id="3.90.110.10:FF:000004">
    <property type="entry name" value="Malate dehydrogenase"/>
    <property type="match status" value="1"/>
</dbReference>
<dbReference type="Gene3D" id="3.90.110.10">
    <property type="entry name" value="Lactate dehydrogenase/glycoside hydrolase, family 4, C-terminal"/>
    <property type="match status" value="1"/>
</dbReference>
<dbReference type="Gene3D" id="3.40.50.720">
    <property type="entry name" value="NAD(P)-binding Rossmann-like Domain"/>
    <property type="match status" value="1"/>
</dbReference>
<dbReference type="HAMAP" id="MF_00487">
    <property type="entry name" value="Malate_dehydrog_3"/>
    <property type="match status" value="1"/>
</dbReference>
<dbReference type="InterPro" id="IPR001557">
    <property type="entry name" value="L-lactate/malate_DH"/>
</dbReference>
<dbReference type="InterPro" id="IPR022383">
    <property type="entry name" value="Lactate/malate_DH_C"/>
</dbReference>
<dbReference type="InterPro" id="IPR001236">
    <property type="entry name" value="Lactate/malate_DH_N"/>
</dbReference>
<dbReference type="InterPro" id="IPR015955">
    <property type="entry name" value="Lactate_DH/Glyco_Ohase_4_C"/>
</dbReference>
<dbReference type="InterPro" id="IPR011275">
    <property type="entry name" value="Malate_DH_type3"/>
</dbReference>
<dbReference type="InterPro" id="IPR036291">
    <property type="entry name" value="NAD(P)-bd_dom_sf"/>
</dbReference>
<dbReference type="NCBIfam" id="TIGR01763">
    <property type="entry name" value="MalateDH_bact"/>
    <property type="match status" value="1"/>
</dbReference>
<dbReference type="NCBIfam" id="NF004863">
    <property type="entry name" value="PRK06223.1"/>
    <property type="match status" value="1"/>
</dbReference>
<dbReference type="PANTHER" id="PTHR43128">
    <property type="entry name" value="L-2-HYDROXYCARBOXYLATE DEHYDROGENASE (NAD(P)(+))"/>
    <property type="match status" value="1"/>
</dbReference>
<dbReference type="PANTHER" id="PTHR43128:SF16">
    <property type="entry name" value="L-LACTATE DEHYDROGENASE"/>
    <property type="match status" value="1"/>
</dbReference>
<dbReference type="Pfam" id="PF02866">
    <property type="entry name" value="Ldh_1_C"/>
    <property type="match status" value="1"/>
</dbReference>
<dbReference type="Pfam" id="PF00056">
    <property type="entry name" value="Ldh_1_N"/>
    <property type="match status" value="1"/>
</dbReference>
<dbReference type="PIRSF" id="PIRSF000102">
    <property type="entry name" value="Lac_mal_DH"/>
    <property type="match status" value="1"/>
</dbReference>
<dbReference type="PRINTS" id="PR00086">
    <property type="entry name" value="LLDHDRGNASE"/>
</dbReference>
<dbReference type="SUPFAM" id="SSF56327">
    <property type="entry name" value="LDH C-terminal domain-like"/>
    <property type="match status" value="1"/>
</dbReference>
<dbReference type="SUPFAM" id="SSF51735">
    <property type="entry name" value="NAD(P)-binding Rossmann-fold domains"/>
    <property type="match status" value="1"/>
</dbReference>
<organism>
    <name type="scientific">Chlorobaculum parvum (strain DSM 263 / NCIMB 8327)</name>
    <name type="common">Chlorobium vibrioforme subsp. thiosulfatophilum</name>
    <dbReference type="NCBI Taxonomy" id="517417"/>
    <lineage>
        <taxon>Bacteria</taxon>
        <taxon>Pseudomonadati</taxon>
        <taxon>Chlorobiota</taxon>
        <taxon>Chlorobiia</taxon>
        <taxon>Chlorobiales</taxon>
        <taxon>Chlorobiaceae</taxon>
        <taxon>Chlorobaculum</taxon>
    </lineage>
</organism>
<gene>
    <name evidence="1" type="primary">mdh</name>
    <name type="ordered locus">Cpar_1594</name>
</gene>
<accession>B3QPY9</accession>
<accession>P80038</accession>
<accession>P94687</accession>
<reference key="1">
    <citation type="submission" date="2008-06" db="EMBL/GenBank/DDBJ databases">
        <title>Complete sequence of Chlorobaculum parvum NCIB 8327.</title>
        <authorList>
            <consortium name="US DOE Joint Genome Institute"/>
            <person name="Lucas S."/>
            <person name="Copeland A."/>
            <person name="Lapidus A."/>
            <person name="Glavina del Rio T."/>
            <person name="Dalin E."/>
            <person name="Tice H."/>
            <person name="Bruce D."/>
            <person name="Goodwin L."/>
            <person name="Pitluck S."/>
            <person name="Schmutz J."/>
            <person name="Larimer F."/>
            <person name="Land M."/>
            <person name="Hauser L."/>
            <person name="Kyrpides N."/>
            <person name="Mikhailova N."/>
            <person name="Zhao F."/>
            <person name="Li T."/>
            <person name="Liu Z."/>
            <person name="Overmann J."/>
            <person name="Bryant D.A."/>
            <person name="Richardson P."/>
        </authorList>
    </citation>
    <scope>NUCLEOTIDE SEQUENCE [LARGE SCALE GENOMIC DNA]</scope>
    <source>
        <strain>DSM 263 / NCIMB 8327</strain>
    </source>
</reference>
<reference key="2">
    <citation type="journal article" date="1992" name="J. Bacteriol.">
        <title>Malate dehydrogenase from Chlorobium vibrioforme, Chlorobium tepidum, and Heliobacterium gestii: purification, characterization, and investigation of dinucleotide binding by dehydrogenases by use of empirical methods of protein sequence analysis.</title>
        <authorList>
            <person name="Charnock C.B."/>
            <person name="Refseth U.H."/>
            <person name="Strevaag R."/>
        </authorList>
    </citation>
    <scope>PROTEIN SEQUENCE OF 1-40</scope>
</reference>
<name>MDH_CHLP8</name>
<keyword id="KW-0903">Direct protein sequencing</keyword>
<keyword id="KW-0520">NAD</keyword>
<keyword id="KW-0560">Oxidoreductase</keyword>
<keyword id="KW-0816">Tricarboxylic acid cycle</keyword>
<sequence length="310" mass="33271">MKITVIGAGNVGATTAFRIADKKLARELVLLDVVEGIPQGKGLDMYETGPVGLFDTKITGSNDYADTADSDIVIITAGLPRKPGMTREDLLMKNAGIVKEVTDNIMKHSKNPIIIVVSNPLDIMTHVAWVRSGLPKERVIGMAGVLDAARFRSFIAMELGVSMQDINACVLGGHGDAMVPVVKYTTVAGIPISDLLPAETIDKLVERTRNGGAEIVEHLKQGSAFYAPASSVVEMVESIVLDRKRVLPCAVGLEGQYGIDKTFVGVPVKLGRNGVEQIYEINLDQADLDLLQKSAKIVDENCKMLESTIG</sequence>
<evidence type="ECO:0000255" key="1">
    <source>
        <dbReference type="HAMAP-Rule" id="MF_00487"/>
    </source>
</evidence>
<evidence type="ECO:0000305" key="2"/>
<protein>
    <recommendedName>
        <fullName evidence="1">Malate dehydrogenase</fullName>
        <ecNumber evidence="1">1.1.1.37</ecNumber>
    </recommendedName>
</protein>
<proteinExistence type="evidence at protein level"/>
<feature type="chain" id="PRO_0000351516" description="Malate dehydrogenase">
    <location>
        <begin position="1"/>
        <end position="310"/>
    </location>
</feature>
<feature type="active site" description="Proton acceptor" evidence="1">
    <location>
        <position position="174"/>
    </location>
</feature>
<feature type="binding site" evidence="1">
    <location>
        <begin position="7"/>
        <end position="12"/>
    </location>
    <ligand>
        <name>NAD(+)</name>
        <dbReference type="ChEBI" id="CHEBI:57540"/>
    </ligand>
</feature>
<feature type="binding site" evidence="1">
    <location>
        <position position="32"/>
    </location>
    <ligand>
        <name>NAD(+)</name>
        <dbReference type="ChEBI" id="CHEBI:57540"/>
    </ligand>
</feature>
<feature type="binding site" evidence="1">
    <location>
        <position position="81"/>
    </location>
    <ligand>
        <name>substrate</name>
    </ligand>
</feature>
<feature type="binding site" evidence="1">
    <location>
        <position position="87"/>
    </location>
    <ligand>
        <name>substrate</name>
    </ligand>
</feature>
<feature type="binding site" evidence="1">
    <location>
        <position position="94"/>
    </location>
    <ligand>
        <name>NAD(+)</name>
        <dbReference type="ChEBI" id="CHEBI:57540"/>
    </ligand>
</feature>
<feature type="binding site" evidence="1">
    <location>
        <begin position="117"/>
        <end position="119"/>
    </location>
    <ligand>
        <name>NAD(+)</name>
        <dbReference type="ChEBI" id="CHEBI:57540"/>
    </ligand>
</feature>
<feature type="binding site" evidence="1">
    <location>
        <position position="119"/>
    </location>
    <ligand>
        <name>substrate</name>
    </ligand>
</feature>
<feature type="binding site" evidence="1">
    <location>
        <position position="150"/>
    </location>
    <ligand>
        <name>substrate</name>
    </ligand>
</feature>
<feature type="sequence conflict" description="In Ref. 2; AA sequence." evidence="2" ref="2">
    <original>R</original>
    <variation>E</variation>
    <location>
        <position position="26"/>
    </location>
</feature>
<feature type="sequence conflict" description="In Ref. 2; AA sequence." evidence="2" ref="2">
    <original>Q</original>
    <variation>E</variation>
    <location>
        <position position="39"/>
    </location>
</feature>